<protein>
    <recommendedName>
        <fullName>Integrator complex subunit 10</fullName>
        <shortName>Int10</shortName>
    </recommendedName>
</protein>
<accession>Q4R7B1</accession>
<comment type="function">
    <text evidence="2">Component of the integrator complex, a multiprotein complex that terminates RNA polymerase II (Pol II) transcription in the promoter-proximal region of genes. The integrator complex provides a quality checkpoint during transcription elongation by driving premature transcription termination of transcripts that are unfavorably configured for transcriptional elongation: the complex terminates transcription by (1) catalyzing dephosphorylation of the C-terminal domain (CTD) of Pol II subunit POLR2A/RPB1 and SUPT5H/SPT5, (2) degrading the exiting nascent RNA transcript via endonuclease activity and (3) promoting the release of Pol II from bound DNA. The integrator complex is also involved in terminating the synthesis of non-coding Pol II transcripts, such as enhancer RNAs (eRNAs), small nuclear RNAs (snRNAs), telomerase RNAs and long non-coding RNAs (lncRNAs). Within the integrator complex, INTS10 is part of the integrator tail module that acts as a platform for the recruitment of transcription factors at promoters. May be not involved in the recruitment of cytoplasmic dynein to the nuclear envelope, probably as component of the integrator complex.</text>
</comment>
<comment type="subunit">
    <text evidence="2">Component of the Integrator complex, composed of core subunits INTS1, INTS2, INTS3, INTS4, INTS5, INTS6, INTS7, INTS8, INTS9/RC74, INTS10, INTS11/CPSF3L, INTS12, INTS13, INTS14 and INTS15. The core complex associates with protein phosphatase 2A subunits PPP2CA and PPP2R1A, to form the Integrator-PP2A (INTAC) complex. INTS10 is part of the tail subcomplex, composed of INTS10, INTS13, INTS14 and INTS15.</text>
</comment>
<comment type="subcellular location">
    <subcellularLocation>
        <location evidence="2">Nucleus</location>
    </subcellularLocation>
</comment>
<comment type="similarity">
    <text evidence="3">Belongs to the Integrator subunit 10 family.</text>
</comment>
<comment type="sequence caution" evidence="3">
    <conflict type="frameshift">
        <sequence resource="EMBL-CDS" id="BAE01011"/>
    </conflict>
</comment>
<evidence type="ECO:0000250" key="1">
    <source>
        <dbReference type="UniProtKB" id="Q8K2A7"/>
    </source>
</evidence>
<evidence type="ECO:0000250" key="2">
    <source>
        <dbReference type="UniProtKB" id="Q9NVR2"/>
    </source>
</evidence>
<evidence type="ECO:0000305" key="3"/>
<keyword id="KW-1017">Isopeptide bond</keyword>
<keyword id="KW-0539">Nucleus</keyword>
<keyword id="KW-0597">Phosphoprotein</keyword>
<keyword id="KW-1185">Reference proteome</keyword>
<keyword id="KW-0832">Ubl conjugation</keyword>
<gene>
    <name type="primary">INTS10</name>
    <name type="ORF">QtsA-15722</name>
</gene>
<dbReference type="EMBL" id="AB168910">
    <property type="protein sequence ID" value="BAE01011.1"/>
    <property type="status" value="ALT_FRAME"/>
    <property type="molecule type" value="mRNA"/>
</dbReference>
<dbReference type="SMR" id="Q4R7B1"/>
<dbReference type="STRING" id="9541.ENSMFAP00000043731"/>
<dbReference type="eggNOG" id="ENOG502QQ28">
    <property type="taxonomic scope" value="Eukaryota"/>
</dbReference>
<dbReference type="Proteomes" id="UP000233100">
    <property type="component" value="Unplaced"/>
</dbReference>
<dbReference type="GO" id="GO:0160232">
    <property type="term" value="C:INTAC complex"/>
    <property type="evidence" value="ECO:0000250"/>
    <property type="project" value="UniProtKB"/>
</dbReference>
<dbReference type="GO" id="GO:0032039">
    <property type="term" value="C:integrator complex"/>
    <property type="evidence" value="ECO:0007669"/>
    <property type="project" value="InterPro"/>
</dbReference>
<dbReference type="GO" id="GO:0005634">
    <property type="term" value="C:nucleus"/>
    <property type="evidence" value="ECO:0000250"/>
    <property type="project" value="UniProtKB"/>
</dbReference>
<dbReference type="GO" id="GO:0160240">
    <property type="term" value="P:RNA polymerase II transcription initiation surveillance"/>
    <property type="evidence" value="ECO:0000250"/>
    <property type="project" value="UniProtKB"/>
</dbReference>
<dbReference type="GO" id="GO:0016180">
    <property type="term" value="P:snRNA processing"/>
    <property type="evidence" value="ECO:0007669"/>
    <property type="project" value="InterPro"/>
</dbReference>
<dbReference type="InterPro" id="IPR026164">
    <property type="entry name" value="Int_cplx_su10"/>
</dbReference>
<dbReference type="PANTHER" id="PTHR16055">
    <property type="entry name" value="INTEGRATOR COMPLEX SUBUNIT 10"/>
    <property type="match status" value="1"/>
</dbReference>
<dbReference type="PANTHER" id="PTHR16055:SF2">
    <property type="entry name" value="INTEGRATOR COMPLEX SUBUNIT 10"/>
    <property type="match status" value="1"/>
</dbReference>
<dbReference type="Pfam" id="PF21045">
    <property type="entry name" value="INT10"/>
    <property type="match status" value="1"/>
</dbReference>
<dbReference type="PRINTS" id="PR02106">
    <property type="entry name" value="INTSUBUNIT10"/>
</dbReference>
<proteinExistence type="evidence at transcript level"/>
<feature type="chain" id="PRO_0000235688" description="Integrator complex subunit 10">
    <location>
        <begin position="1"/>
        <end position="699"/>
    </location>
</feature>
<feature type="modified residue" description="Phosphoserine" evidence="2">
    <location>
        <position position="220"/>
    </location>
</feature>
<feature type="modified residue" description="Phosphoserine" evidence="1">
    <location>
        <position position="370"/>
    </location>
</feature>
<feature type="cross-link" description="Glycyl lysine isopeptide (Lys-Gly) (interchain with G-Cter in SUMO2)" evidence="2">
    <location>
        <position position="453"/>
    </location>
</feature>
<organism>
    <name type="scientific">Macaca fascicularis</name>
    <name type="common">Crab-eating macaque</name>
    <name type="synonym">Cynomolgus monkey</name>
    <dbReference type="NCBI Taxonomy" id="9541"/>
    <lineage>
        <taxon>Eukaryota</taxon>
        <taxon>Metazoa</taxon>
        <taxon>Chordata</taxon>
        <taxon>Craniata</taxon>
        <taxon>Vertebrata</taxon>
        <taxon>Euteleostomi</taxon>
        <taxon>Mammalia</taxon>
        <taxon>Eutheria</taxon>
        <taxon>Euarchontoglires</taxon>
        <taxon>Primates</taxon>
        <taxon>Haplorrhini</taxon>
        <taxon>Catarrhini</taxon>
        <taxon>Cercopithecidae</taxon>
        <taxon>Cercopithecinae</taxon>
        <taxon>Macaca</taxon>
    </lineage>
</organism>
<sequence>MSAQGDCEFLVQRAREWLITARSLYPADFNIQYEMYTIERNAERTATAGRLLYDMFVNFPDQPVVWREISIIISALRNDSQDKQTQFLRSLFETLPGRVQCEMLLKVTEQCFNTLERSEMLLLLLRRFPETVVQHGVGLGEALLEAETIEEQESPVNCFRKLFVCDVLPLIINNHDVRLPANLLYKYLNKAAEFYINYVTRSTQTENQHQGAQDTSDLMSPSKRSSQKYIIEGLTEKSSQIVDPWERLFKILNVVGMRCEWQMDKGRRSYGDILHRMKDLCRYMNNFDSEAHAKYKNQVVYSTMLVFFKNAFQYVNSIQPSLFQGPNAPSQVPLVLLEDVSNVYGDVEIDRNKHIHKKRKLAEGREKTMSPDDEDCSAKGRNRHIVVNKAELANSIEVLESFKLARESWELLYSLEFLDKEFTRICLAWKTDTWLWLRIFLTDMIIYQGQYKKAIASLHHLAALQGSISQPQITGQGTLEHQRALIQLATCHFALGEYRMTCEKVLDLMCYMVLPIQDGGKSQEEPSKVKPKFRKGSDLKLLPCTSKAIMPYCLHLMLACFKLRAFTDNRDDMALGHVIVLLQQEWPRGENLFLKAVNKICQQGNFQYENFFNYVTNIDMLEEFAYLRTQEGGKIHLELLPNQGMLIKHHTVTRGITKGVKEDFRLAMERQVSRCGENLMVVLHRFCINEKILLLQTLT</sequence>
<name>INT10_MACFA</name>
<reference key="1">
    <citation type="submission" date="2005-06" db="EMBL/GenBank/DDBJ databases">
        <title>DNA sequences of macaque genes expressed in brain or testis and its evolutionary implications.</title>
        <authorList>
            <consortium name="International consortium for macaque cDNA sequencing and analysis"/>
        </authorList>
    </citation>
    <scope>NUCLEOTIDE SEQUENCE [LARGE SCALE MRNA]</scope>
    <source>
        <tissue>Testis</tissue>
    </source>
</reference>